<dbReference type="EC" id="3.1.26.5" evidence="1"/>
<dbReference type="EMBL" id="CP000390">
    <property type="protein sequence ID" value="ABG61779.1"/>
    <property type="molecule type" value="Genomic_DNA"/>
</dbReference>
<dbReference type="SMR" id="Q11LE6"/>
<dbReference type="STRING" id="266779.Meso_0375"/>
<dbReference type="KEGG" id="mes:Meso_0375"/>
<dbReference type="eggNOG" id="COG0594">
    <property type="taxonomic scope" value="Bacteria"/>
</dbReference>
<dbReference type="HOGENOM" id="CLU_117179_6_1_5"/>
<dbReference type="OrthoDB" id="9810867at2"/>
<dbReference type="GO" id="GO:0030677">
    <property type="term" value="C:ribonuclease P complex"/>
    <property type="evidence" value="ECO:0007669"/>
    <property type="project" value="TreeGrafter"/>
</dbReference>
<dbReference type="GO" id="GO:0042781">
    <property type="term" value="F:3'-tRNA processing endoribonuclease activity"/>
    <property type="evidence" value="ECO:0007669"/>
    <property type="project" value="TreeGrafter"/>
</dbReference>
<dbReference type="GO" id="GO:0004526">
    <property type="term" value="F:ribonuclease P activity"/>
    <property type="evidence" value="ECO:0007669"/>
    <property type="project" value="UniProtKB-UniRule"/>
</dbReference>
<dbReference type="GO" id="GO:0000049">
    <property type="term" value="F:tRNA binding"/>
    <property type="evidence" value="ECO:0007669"/>
    <property type="project" value="UniProtKB-UniRule"/>
</dbReference>
<dbReference type="GO" id="GO:0001682">
    <property type="term" value="P:tRNA 5'-leader removal"/>
    <property type="evidence" value="ECO:0007669"/>
    <property type="project" value="UniProtKB-UniRule"/>
</dbReference>
<dbReference type="Gene3D" id="3.30.230.10">
    <property type="match status" value="1"/>
</dbReference>
<dbReference type="HAMAP" id="MF_00227">
    <property type="entry name" value="RNase_P"/>
    <property type="match status" value="1"/>
</dbReference>
<dbReference type="InterPro" id="IPR020568">
    <property type="entry name" value="Ribosomal_Su5_D2-typ_SF"/>
</dbReference>
<dbReference type="InterPro" id="IPR014721">
    <property type="entry name" value="Ribsml_uS5_D2-typ_fold_subgr"/>
</dbReference>
<dbReference type="InterPro" id="IPR000100">
    <property type="entry name" value="RNase_P"/>
</dbReference>
<dbReference type="InterPro" id="IPR020539">
    <property type="entry name" value="RNase_P_CS"/>
</dbReference>
<dbReference type="NCBIfam" id="TIGR00188">
    <property type="entry name" value="rnpA"/>
    <property type="match status" value="1"/>
</dbReference>
<dbReference type="PANTHER" id="PTHR33992">
    <property type="entry name" value="RIBONUCLEASE P PROTEIN COMPONENT"/>
    <property type="match status" value="1"/>
</dbReference>
<dbReference type="PANTHER" id="PTHR33992:SF1">
    <property type="entry name" value="RIBONUCLEASE P PROTEIN COMPONENT"/>
    <property type="match status" value="1"/>
</dbReference>
<dbReference type="Pfam" id="PF00825">
    <property type="entry name" value="Ribonuclease_P"/>
    <property type="match status" value="1"/>
</dbReference>
<dbReference type="SUPFAM" id="SSF54211">
    <property type="entry name" value="Ribosomal protein S5 domain 2-like"/>
    <property type="match status" value="1"/>
</dbReference>
<dbReference type="PROSITE" id="PS00648">
    <property type="entry name" value="RIBONUCLEASE_P"/>
    <property type="match status" value="1"/>
</dbReference>
<reference key="1">
    <citation type="submission" date="2006-06" db="EMBL/GenBank/DDBJ databases">
        <title>Complete sequence of chromosome of Mesorhizobium sp. BNC1.</title>
        <authorList>
            <consortium name="US DOE Joint Genome Institute"/>
            <person name="Copeland A."/>
            <person name="Lucas S."/>
            <person name="Lapidus A."/>
            <person name="Barry K."/>
            <person name="Detter J.C."/>
            <person name="Glavina del Rio T."/>
            <person name="Hammon N."/>
            <person name="Israni S."/>
            <person name="Dalin E."/>
            <person name="Tice H."/>
            <person name="Pitluck S."/>
            <person name="Chertkov O."/>
            <person name="Brettin T."/>
            <person name="Bruce D."/>
            <person name="Han C."/>
            <person name="Tapia R."/>
            <person name="Gilna P."/>
            <person name="Schmutz J."/>
            <person name="Larimer F."/>
            <person name="Land M."/>
            <person name="Hauser L."/>
            <person name="Kyrpides N."/>
            <person name="Mikhailova N."/>
            <person name="Richardson P."/>
        </authorList>
    </citation>
    <scope>NUCLEOTIDE SEQUENCE [LARGE SCALE GENOMIC DNA]</scope>
    <source>
        <strain>BNC1</strain>
    </source>
</reference>
<accession>Q11LE6</accession>
<feature type="chain" id="PRO_1000021426" description="Ribonuclease P protein component">
    <location>
        <begin position="1"/>
        <end position="120"/>
    </location>
</feature>
<comment type="function">
    <text evidence="1">RNaseP catalyzes the removal of the 5'-leader sequence from pre-tRNA to produce the mature 5'-terminus. It can also cleave other RNA substrates such as 4.5S RNA. The protein component plays an auxiliary but essential role in vivo by binding to the 5'-leader sequence and broadening the substrate specificity of the ribozyme.</text>
</comment>
<comment type="catalytic activity">
    <reaction evidence="1">
        <text>Endonucleolytic cleavage of RNA, removing 5'-extranucleotides from tRNA precursor.</text>
        <dbReference type="EC" id="3.1.26.5"/>
    </reaction>
</comment>
<comment type="subunit">
    <text evidence="1">Consists of a catalytic RNA component (M1 or rnpB) and a protein subunit.</text>
</comment>
<comment type="similarity">
    <text evidence="1">Belongs to the RnpA family.</text>
</comment>
<organism>
    <name type="scientific">Chelativorans sp. (strain BNC1)</name>
    <dbReference type="NCBI Taxonomy" id="266779"/>
    <lineage>
        <taxon>Bacteria</taxon>
        <taxon>Pseudomonadati</taxon>
        <taxon>Pseudomonadota</taxon>
        <taxon>Alphaproteobacteria</taxon>
        <taxon>Hyphomicrobiales</taxon>
        <taxon>Phyllobacteriaceae</taxon>
        <taxon>Chelativorans</taxon>
    </lineage>
</organism>
<protein>
    <recommendedName>
        <fullName evidence="1">Ribonuclease P protein component</fullName>
        <shortName evidence="1">RNase P protein</shortName>
        <shortName evidence="1">RNaseP protein</shortName>
        <ecNumber evidence="1">3.1.26.5</ecNumber>
    </recommendedName>
    <alternativeName>
        <fullName evidence="1">Protein C5</fullName>
    </alternativeName>
</protein>
<keyword id="KW-0255">Endonuclease</keyword>
<keyword id="KW-0378">Hydrolase</keyword>
<keyword id="KW-0540">Nuclease</keyword>
<keyword id="KW-0694">RNA-binding</keyword>
<keyword id="KW-0819">tRNA processing</keyword>
<gene>
    <name evidence="1" type="primary">rnpA</name>
    <name type="ordered locus">Meso_0375</name>
</gene>
<name>RNPA_CHESB</name>
<sequence>MSGRAQRQHPGRLTKRAEFLAVQRGLKLRGRLFLLELLARGDDDPPRVGITVTKKVGNAVERNRIRRRLREAVRVHAADDMATGTDYVIVGRREILDAPFGALKDELSRRIRGNKPARTG</sequence>
<proteinExistence type="inferred from homology"/>
<evidence type="ECO:0000255" key="1">
    <source>
        <dbReference type="HAMAP-Rule" id="MF_00227"/>
    </source>
</evidence>